<comment type="function">
    <text evidence="1">DNA-binding transcriptional regulator that functions as a regulator of central sugar catabolic pathways.</text>
</comment>
<comment type="domain">
    <text evidence="1">Contains an N-terminal DNA-binding winged helix-turn-helix domain and a C-terminal regulatory domain (or effector binding domain) resembling phosphoribosyltransferase (PRT) domain.</text>
</comment>
<comment type="similarity">
    <text evidence="1">Belongs to the purine/pyrimidine phosphoribosyltransferase family. GfcR subfamily.</text>
</comment>
<name>GFCR_HALSA</name>
<accession>Q9HS16</accession>
<gene>
    <name evidence="1" type="primary">gfcR</name>
    <name evidence="2" type="synonym">pyrE1</name>
    <name type="ordered locus">VNG_0448G</name>
</gene>
<organism>
    <name type="scientific">Halobacterium salinarum (strain ATCC 700922 / JCM 11081 / NRC-1)</name>
    <name type="common">Halobacterium halobium</name>
    <dbReference type="NCBI Taxonomy" id="64091"/>
    <lineage>
        <taxon>Archaea</taxon>
        <taxon>Methanobacteriati</taxon>
        <taxon>Methanobacteriota</taxon>
        <taxon>Stenosarchaea group</taxon>
        <taxon>Halobacteria</taxon>
        <taxon>Halobacteriales</taxon>
        <taxon>Halobacteriaceae</taxon>
        <taxon>Halobacterium</taxon>
        <taxon>Halobacterium salinarum NRC-34001</taxon>
    </lineage>
</organism>
<keyword id="KW-0238">DNA-binding</keyword>
<keyword id="KW-1185">Reference proteome</keyword>
<keyword id="KW-0804">Transcription</keyword>
<keyword id="KW-0805">Transcription regulation</keyword>
<sequence>MKNVDDLIDDAAALADRGLSRGEIADELNVSRETASWLVERADTNASVAATDTDDSPRDVHVDWSTIGEAGARLSAIGIALADALRDHSHDVDLVVGIEKAGVPLATATANELGTDLATYTPRKHQWDEGDMADLGGSFSRNFASVEDRDCFVVDDTVTSGTTITETIQAVREAGGTPVACGVLADKQGLGDVDGTPIEALLQVIRVGSGDD</sequence>
<dbReference type="EMBL" id="AE004437">
    <property type="protein sequence ID" value="AAG18992.1"/>
    <property type="molecule type" value="Genomic_DNA"/>
</dbReference>
<dbReference type="PIR" id="D84203">
    <property type="entry name" value="D84203"/>
</dbReference>
<dbReference type="RefSeq" id="WP_010902287.1">
    <property type="nucleotide sequence ID" value="NC_002607.1"/>
</dbReference>
<dbReference type="SMR" id="Q9HS16"/>
<dbReference type="FunCoup" id="Q9HS16">
    <property type="interactions" value="68"/>
</dbReference>
<dbReference type="STRING" id="64091.VNG_0448G"/>
<dbReference type="PaxDb" id="64091-VNG_0448G"/>
<dbReference type="GeneID" id="68693362"/>
<dbReference type="KEGG" id="hal:VNG_0448G"/>
<dbReference type="PATRIC" id="fig|64091.14.peg.336"/>
<dbReference type="HOGENOM" id="CLU_111001_0_0_2"/>
<dbReference type="InParanoid" id="Q9HS16"/>
<dbReference type="OrthoDB" id="68893at2157"/>
<dbReference type="PhylomeDB" id="Q9HS16"/>
<dbReference type="Proteomes" id="UP000000554">
    <property type="component" value="Chromosome"/>
</dbReference>
<dbReference type="GO" id="GO:0003677">
    <property type="term" value="F:DNA binding"/>
    <property type="evidence" value="ECO:0007669"/>
    <property type="project" value="UniProtKB-UniRule"/>
</dbReference>
<dbReference type="GO" id="GO:0004588">
    <property type="term" value="F:orotate phosphoribosyltransferase activity"/>
    <property type="evidence" value="ECO:0000318"/>
    <property type="project" value="GO_Central"/>
</dbReference>
<dbReference type="GO" id="GO:0019856">
    <property type="term" value="P:pyrimidine nucleobase biosynthetic process"/>
    <property type="evidence" value="ECO:0000318"/>
    <property type="project" value="GO_Central"/>
</dbReference>
<dbReference type="GO" id="GO:0010468">
    <property type="term" value="P:regulation of gene expression"/>
    <property type="evidence" value="ECO:0007669"/>
    <property type="project" value="UniProtKB-UniRule"/>
</dbReference>
<dbReference type="GO" id="GO:0006222">
    <property type="term" value="P:UMP biosynthetic process"/>
    <property type="evidence" value="ECO:0000318"/>
    <property type="project" value="GO_Central"/>
</dbReference>
<dbReference type="CDD" id="cd06223">
    <property type="entry name" value="PRTases_typeI"/>
    <property type="match status" value="1"/>
</dbReference>
<dbReference type="Gene3D" id="3.40.50.2020">
    <property type="match status" value="1"/>
</dbReference>
<dbReference type="HAMAP" id="MF_01214">
    <property type="entry name" value="GfcR"/>
    <property type="match status" value="1"/>
</dbReference>
<dbReference type="InterPro" id="IPR053401">
    <property type="entry name" value="GcfR_halob"/>
</dbReference>
<dbReference type="InterPro" id="IPR022854">
    <property type="entry name" value="GfcR-like"/>
</dbReference>
<dbReference type="InterPro" id="IPR000836">
    <property type="entry name" value="PRibTrfase_dom"/>
</dbReference>
<dbReference type="InterPro" id="IPR029057">
    <property type="entry name" value="PRTase-like"/>
</dbReference>
<dbReference type="NCBIfam" id="NF002620">
    <property type="entry name" value="PRK02277.1"/>
    <property type="match status" value="1"/>
</dbReference>
<dbReference type="NCBIfam" id="NF045507">
    <property type="entry name" value="transregGfcR_Halo"/>
    <property type="match status" value="1"/>
</dbReference>
<dbReference type="PANTHER" id="PTHR19278">
    <property type="entry name" value="OROTATE PHOSPHORIBOSYLTRANSFERASE"/>
    <property type="match status" value="1"/>
</dbReference>
<dbReference type="PANTHER" id="PTHR19278:SF41">
    <property type="entry name" value="PYRE-LIKE PROTEIN"/>
    <property type="match status" value="1"/>
</dbReference>
<dbReference type="Pfam" id="PF00156">
    <property type="entry name" value="Pribosyltran"/>
    <property type="match status" value="1"/>
</dbReference>
<dbReference type="SUPFAM" id="SSF53271">
    <property type="entry name" value="PRTase-like"/>
    <property type="match status" value="1"/>
</dbReference>
<evidence type="ECO:0000255" key="1">
    <source>
        <dbReference type="HAMAP-Rule" id="MF_01214"/>
    </source>
</evidence>
<evidence type="ECO:0000312" key="2">
    <source>
        <dbReference type="EMBL" id="AAG18992.1"/>
    </source>
</evidence>
<proteinExistence type="inferred from homology"/>
<protein>
    <recommendedName>
        <fullName evidence="1">Transcriptional regulator GfcR</fullName>
    </recommendedName>
</protein>
<feature type="chain" id="PRO_0000110807" description="Transcriptional regulator GfcR">
    <location>
        <begin position="1"/>
        <end position="212"/>
    </location>
</feature>
<reference key="1">
    <citation type="journal article" date="2000" name="Proc. Natl. Acad. Sci. U.S.A.">
        <title>Genome sequence of Halobacterium species NRC-1.</title>
        <authorList>
            <person name="Ng W.V."/>
            <person name="Kennedy S.P."/>
            <person name="Mahairas G.G."/>
            <person name="Berquist B."/>
            <person name="Pan M."/>
            <person name="Shukla H.D."/>
            <person name="Lasky S.R."/>
            <person name="Baliga N.S."/>
            <person name="Thorsson V."/>
            <person name="Sbrogna J."/>
            <person name="Swartzell S."/>
            <person name="Weir D."/>
            <person name="Hall J."/>
            <person name="Dahl T.A."/>
            <person name="Welti R."/>
            <person name="Goo Y.A."/>
            <person name="Leithauser B."/>
            <person name="Keller K."/>
            <person name="Cruz R."/>
            <person name="Danson M.J."/>
            <person name="Hough D.W."/>
            <person name="Maddocks D.G."/>
            <person name="Jablonski P.E."/>
            <person name="Krebs M.P."/>
            <person name="Angevine C.M."/>
            <person name="Dale H."/>
            <person name="Isenbarger T.A."/>
            <person name="Peck R.F."/>
            <person name="Pohlschroder M."/>
            <person name="Spudich J.L."/>
            <person name="Jung K.-H."/>
            <person name="Alam M."/>
            <person name="Freitas T."/>
            <person name="Hou S."/>
            <person name="Daniels C.J."/>
            <person name="Dennis P.P."/>
            <person name="Omer A.D."/>
            <person name="Ebhardt H."/>
            <person name="Lowe T.M."/>
            <person name="Liang P."/>
            <person name="Riley M."/>
            <person name="Hood L."/>
            <person name="DasSarma S."/>
        </authorList>
    </citation>
    <scope>NUCLEOTIDE SEQUENCE [LARGE SCALE GENOMIC DNA]</scope>
    <source>
        <strain>ATCC 700922 / JCM 11081 / NRC-1</strain>
    </source>
</reference>